<keyword id="KW-0227">DNA damage</keyword>
<keyword id="KW-0233">DNA recombination</keyword>
<keyword id="KW-0234">DNA repair</keyword>
<keyword id="KW-0479">Metal-binding</keyword>
<keyword id="KW-0862">Zinc</keyword>
<keyword id="KW-0863">Zinc-finger</keyword>
<organism>
    <name type="scientific">Shigella flexneri serotype 5b (strain 8401)</name>
    <dbReference type="NCBI Taxonomy" id="373384"/>
    <lineage>
        <taxon>Bacteria</taxon>
        <taxon>Pseudomonadati</taxon>
        <taxon>Pseudomonadota</taxon>
        <taxon>Gammaproteobacteria</taxon>
        <taxon>Enterobacterales</taxon>
        <taxon>Enterobacteriaceae</taxon>
        <taxon>Shigella</taxon>
    </lineage>
</organism>
<reference key="1">
    <citation type="journal article" date="2006" name="BMC Genomics">
        <title>Complete genome sequence of Shigella flexneri 5b and comparison with Shigella flexneri 2a.</title>
        <authorList>
            <person name="Nie H."/>
            <person name="Yang F."/>
            <person name="Zhang X."/>
            <person name="Yang J."/>
            <person name="Chen L."/>
            <person name="Wang J."/>
            <person name="Xiong Z."/>
            <person name="Peng J."/>
            <person name="Sun L."/>
            <person name="Dong J."/>
            <person name="Xue Y."/>
            <person name="Xu X."/>
            <person name="Chen S."/>
            <person name="Yao Z."/>
            <person name="Shen Y."/>
            <person name="Jin Q."/>
        </authorList>
    </citation>
    <scope>NUCLEOTIDE SEQUENCE [LARGE SCALE GENOMIC DNA]</scope>
    <source>
        <strain>8401</strain>
    </source>
</reference>
<name>RECR_SHIF8</name>
<proteinExistence type="inferred from homology"/>
<gene>
    <name evidence="1" type="primary">recR</name>
    <name type="ordered locus">SFV_0445</name>
</gene>
<feature type="chain" id="PRO_1000001613" description="Recombination protein RecR">
    <location>
        <begin position="1"/>
        <end position="201"/>
    </location>
</feature>
<feature type="domain" description="Toprim" evidence="1">
    <location>
        <begin position="81"/>
        <end position="176"/>
    </location>
</feature>
<feature type="zinc finger region" description="C4-type" evidence="1">
    <location>
        <begin position="57"/>
        <end position="72"/>
    </location>
</feature>
<accession>Q0T7B2</accession>
<sequence length="201" mass="21963">MQTSPLLTQLMEALRCLPGVGPKSAQRMAFTLLQRDRSGGMRLAQALTRAMSEIGHCADCRTFTEQEVCNICSNPRRQENGQICVVESPADIYAIEQTGQFSGRYFVLMGHLSPLDGIGPDDIGLDRLEQRLAEEKITEVILATNPTVEGEATANYIAELCAQYDVEASRIAHGVPVGGELEMVDGTTLSHSLAGRHKIRF</sequence>
<evidence type="ECO:0000255" key="1">
    <source>
        <dbReference type="HAMAP-Rule" id="MF_00017"/>
    </source>
</evidence>
<dbReference type="EMBL" id="CP000266">
    <property type="protein sequence ID" value="ABF02714.1"/>
    <property type="molecule type" value="Genomic_DNA"/>
</dbReference>
<dbReference type="RefSeq" id="WP_001195025.1">
    <property type="nucleotide sequence ID" value="NC_008258.1"/>
</dbReference>
<dbReference type="SMR" id="Q0T7B2"/>
<dbReference type="GeneID" id="93776978"/>
<dbReference type="KEGG" id="sfv:SFV_0445"/>
<dbReference type="HOGENOM" id="CLU_060739_1_2_6"/>
<dbReference type="Proteomes" id="UP000000659">
    <property type="component" value="Chromosome"/>
</dbReference>
<dbReference type="GO" id="GO:0003677">
    <property type="term" value="F:DNA binding"/>
    <property type="evidence" value="ECO:0007669"/>
    <property type="project" value="UniProtKB-UniRule"/>
</dbReference>
<dbReference type="GO" id="GO:0008270">
    <property type="term" value="F:zinc ion binding"/>
    <property type="evidence" value="ECO:0007669"/>
    <property type="project" value="UniProtKB-KW"/>
</dbReference>
<dbReference type="GO" id="GO:0006310">
    <property type="term" value="P:DNA recombination"/>
    <property type="evidence" value="ECO:0007669"/>
    <property type="project" value="UniProtKB-UniRule"/>
</dbReference>
<dbReference type="GO" id="GO:0006281">
    <property type="term" value="P:DNA repair"/>
    <property type="evidence" value="ECO:0007669"/>
    <property type="project" value="UniProtKB-UniRule"/>
</dbReference>
<dbReference type="CDD" id="cd01025">
    <property type="entry name" value="TOPRIM_recR"/>
    <property type="match status" value="1"/>
</dbReference>
<dbReference type="FunFam" id="1.10.8.420:FF:000001">
    <property type="entry name" value="Recombination protein RecR"/>
    <property type="match status" value="1"/>
</dbReference>
<dbReference type="FunFam" id="3.40.1360.10:FF:000001">
    <property type="entry name" value="Recombination protein RecR"/>
    <property type="match status" value="1"/>
</dbReference>
<dbReference type="Gene3D" id="3.40.1360.10">
    <property type="match status" value="1"/>
</dbReference>
<dbReference type="Gene3D" id="6.10.250.240">
    <property type="match status" value="1"/>
</dbReference>
<dbReference type="Gene3D" id="1.10.8.420">
    <property type="entry name" value="RecR Domain 1"/>
    <property type="match status" value="1"/>
</dbReference>
<dbReference type="HAMAP" id="MF_00017">
    <property type="entry name" value="RecR"/>
    <property type="match status" value="1"/>
</dbReference>
<dbReference type="InterPro" id="IPR000093">
    <property type="entry name" value="DNA_Rcmb_RecR"/>
</dbReference>
<dbReference type="InterPro" id="IPR023627">
    <property type="entry name" value="Rcmb_RecR"/>
</dbReference>
<dbReference type="InterPro" id="IPR015967">
    <property type="entry name" value="Rcmb_RecR_Znf"/>
</dbReference>
<dbReference type="InterPro" id="IPR006171">
    <property type="entry name" value="TOPRIM_dom"/>
</dbReference>
<dbReference type="InterPro" id="IPR034137">
    <property type="entry name" value="TOPRIM_RecR"/>
</dbReference>
<dbReference type="NCBIfam" id="TIGR00615">
    <property type="entry name" value="recR"/>
    <property type="match status" value="1"/>
</dbReference>
<dbReference type="PANTHER" id="PTHR30446">
    <property type="entry name" value="RECOMBINATION PROTEIN RECR"/>
    <property type="match status" value="1"/>
</dbReference>
<dbReference type="PANTHER" id="PTHR30446:SF0">
    <property type="entry name" value="RECOMBINATION PROTEIN RECR"/>
    <property type="match status" value="1"/>
</dbReference>
<dbReference type="Pfam" id="PF21175">
    <property type="entry name" value="RecR_C"/>
    <property type="match status" value="1"/>
</dbReference>
<dbReference type="Pfam" id="PF21176">
    <property type="entry name" value="RecR_HhH"/>
    <property type="match status" value="1"/>
</dbReference>
<dbReference type="Pfam" id="PF02132">
    <property type="entry name" value="RecR_ZnF"/>
    <property type="match status" value="1"/>
</dbReference>
<dbReference type="Pfam" id="PF13662">
    <property type="entry name" value="Toprim_4"/>
    <property type="match status" value="1"/>
</dbReference>
<dbReference type="SMART" id="SM00493">
    <property type="entry name" value="TOPRIM"/>
    <property type="match status" value="1"/>
</dbReference>
<dbReference type="SUPFAM" id="SSF111304">
    <property type="entry name" value="Recombination protein RecR"/>
    <property type="match status" value="1"/>
</dbReference>
<dbReference type="PROSITE" id="PS01300">
    <property type="entry name" value="RECR"/>
    <property type="match status" value="1"/>
</dbReference>
<dbReference type="PROSITE" id="PS50880">
    <property type="entry name" value="TOPRIM"/>
    <property type="match status" value="1"/>
</dbReference>
<comment type="function">
    <text evidence="1">May play a role in DNA repair. It seems to be involved in an RecBC-independent recombinational process of DNA repair. It may act with RecF and RecO.</text>
</comment>
<comment type="similarity">
    <text evidence="1">Belongs to the RecR family.</text>
</comment>
<protein>
    <recommendedName>
        <fullName evidence="1">Recombination protein RecR</fullName>
    </recommendedName>
</protein>